<proteinExistence type="inferred from homology"/>
<name>GCS2_LARHH</name>
<sequence>MLDFCASQPLTLGVELELMIVNRHDYNLTRGSDDLLRLIGREDHGFDIKPEITQGMIEIGTAIHTRTRAMLEELDAIRAVLVRAADTLNLGLAGGGAHPFQHWSEQRIYPKERYLLVSELYGYLAQQFTVYGQHIHIGCPDGDQAIRLAHFLARYIPHFIALSAASPYYQGVDTLFQSSRLTSVNAFPLSGTLPCVTDWAGFNDYFVRMQQLGIVASMKDFYWDVRPKPEYGTVEIRVCDTPLDLLTPVLLAAYAQMLARECMESGWQAIHSDNYLAYSYNRFQACRFGFEGLILNPADNGQVSLQQDLVTTLTRLEPQAAALGCEAERQQLLARALARDNPSRQLRTLYERSGSLNDLVRRQSAVWMRDAATL</sequence>
<protein>
    <recommendedName>
        <fullName evidence="1">Putative glutamate--cysteine ligase 2</fullName>
        <ecNumber evidence="1">6.3.2.2</ecNumber>
    </recommendedName>
    <alternativeName>
        <fullName evidence="1">Gamma-glutamylcysteine synthetase 2</fullName>
        <shortName evidence="1">GCS 2</shortName>
        <shortName evidence="1">Gamma-GCS 2</shortName>
    </alternativeName>
</protein>
<accession>C1DD64</accession>
<organism>
    <name type="scientific">Laribacter hongkongensis (strain HLHK9)</name>
    <dbReference type="NCBI Taxonomy" id="557598"/>
    <lineage>
        <taxon>Bacteria</taxon>
        <taxon>Pseudomonadati</taxon>
        <taxon>Pseudomonadota</taxon>
        <taxon>Betaproteobacteria</taxon>
        <taxon>Neisseriales</taxon>
        <taxon>Aquaspirillaceae</taxon>
        <taxon>Laribacter</taxon>
    </lineage>
</organism>
<reference key="1">
    <citation type="journal article" date="2009" name="PLoS Genet.">
        <title>The complete genome and proteome of Laribacter hongkongensis reveal potential mechanisms for adaptations to different temperatures and habitats.</title>
        <authorList>
            <person name="Woo P.C.Y."/>
            <person name="Lau S.K.P."/>
            <person name="Tse H."/>
            <person name="Teng J.L.L."/>
            <person name="Curreem S.O."/>
            <person name="Tsang A.K.L."/>
            <person name="Fan R.Y.Y."/>
            <person name="Wong G.K.M."/>
            <person name="Huang Y."/>
            <person name="Loman N.J."/>
            <person name="Snyder L.A.S."/>
            <person name="Cai J.J."/>
            <person name="Huang J.-D."/>
            <person name="Mak W."/>
            <person name="Pallen M.J."/>
            <person name="Lok S."/>
            <person name="Yuen K.-Y."/>
        </authorList>
    </citation>
    <scope>NUCLEOTIDE SEQUENCE [LARGE SCALE GENOMIC DNA]</scope>
    <source>
        <strain>HLHK9</strain>
    </source>
</reference>
<dbReference type="EC" id="6.3.2.2" evidence="1"/>
<dbReference type="EMBL" id="CP001154">
    <property type="protein sequence ID" value="ACO73699.1"/>
    <property type="molecule type" value="Genomic_DNA"/>
</dbReference>
<dbReference type="RefSeq" id="WP_012696191.1">
    <property type="nucleotide sequence ID" value="NC_012559.1"/>
</dbReference>
<dbReference type="SMR" id="C1DD64"/>
<dbReference type="STRING" id="557598.LHK_00706"/>
<dbReference type="KEGG" id="lhk:LHK_00706"/>
<dbReference type="eggNOG" id="COG2170">
    <property type="taxonomic scope" value="Bacteria"/>
</dbReference>
<dbReference type="HOGENOM" id="CLU_044848_1_1_4"/>
<dbReference type="Proteomes" id="UP000002010">
    <property type="component" value="Chromosome"/>
</dbReference>
<dbReference type="GO" id="GO:0005524">
    <property type="term" value="F:ATP binding"/>
    <property type="evidence" value="ECO:0007669"/>
    <property type="project" value="UniProtKB-KW"/>
</dbReference>
<dbReference type="GO" id="GO:0004357">
    <property type="term" value="F:glutamate-cysteine ligase activity"/>
    <property type="evidence" value="ECO:0007669"/>
    <property type="project" value="UniProtKB-EC"/>
</dbReference>
<dbReference type="GO" id="GO:0042398">
    <property type="term" value="P:modified amino acid biosynthetic process"/>
    <property type="evidence" value="ECO:0007669"/>
    <property type="project" value="InterPro"/>
</dbReference>
<dbReference type="Gene3D" id="3.30.590.20">
    <property type="match status" value="1"/>
</dbReference>
<dbReference type="HAMAP" id="MF_01609">
    <property type="entry name" value="Glu_cys_ligase_2"/>
    <property type="match status" value="1"/>
</dbReference>
<dbReference type="InterPro" id="IPR050141">
    <property type="entry name" value="GCL_type2/YbdK_subfam"/>
</dbReference>
<dbReference type="InterPro" id="IPR006336">
    <property type="entry name" value="GCS2"/>
</dbReference>
<dbReference type="InterPro" id="IPR014746">
    <property type="entry name" value="Gln_synth/guanido_kin_cat_dom"/>
</dbReference>
<dbReference type="InterPro" id="IPR011793">
    <property type="entry name" value="YbdK"/>
</dbReference>
<dbReference type="NCBIfam" id="TIGR02050">
    <property type="entry name" value="gshA_cyan_rel"/>
    <property type="match status" value="1"/>
</dbReference>
<dbReference type="NCBIfam" id="NF010040">
    <property type="entry name" value="PRK13516.1"/>
    <property type="match status" value="1"/>
</dbReference>
<dbReference type="PANTHER" id="PTHR36510">
    <property type="entry name" value="GLUTAMATE--CYSTEINE LIGASE 2-RELATED"/>
    <property type="match status" value="1"/>
</dbReference>
<dbReference type="PANTHER" id="PTHR36510:SF1">
    <property type="entry name" value="GLUTAMATE--CYSTEINE LIGASE 2-RELATED"/>
    <property type="match status" value="1"/>
</dbReference>
<dbReference type="Pfam" id="PF04107">
    <property type="entry name" value="GCS2"/>
    <property type="match status" value="1"/>
</dbReference>
<dbReference type="SUPFAM" id="SSF55931">
    <property type="entry name" value="Glutamine synthetase/guanido kinase"/>
    <property type="match status" value="1"/>
</dbReference>
<feature type="chain" id="PRO_1000185851" description="Putative glutamate--cysteine ligase 2">
    <location>
        <begin position="1"/>
        <end position="374"/>
    </location>
</feature>
<comment type="function">
    <text evidence="1">ATP-dependent carboxylate-amine ligase which exhibits weak glutamate--cysteine ligase activity.</text>
</comment>
<comment type="catalytic activity">
    <reaction evidence="1">
        <text>L-cysteine + L-glutamate + ATP = gamma-L-glutamyl-L-cysteine + ADP + phosphate + H(+)</text>
        <dbReference type="Rhea" id="RHEA:13285"/>
        <dbReference type="ChEBI" id="CHEBI:15378"/>
        <dbReference type="ChEBI" id="CHEBI:29985"/>
        <dbReference type="ChEBI" id="CHEBI:30616"/>
        <dbReference type="ChEBI" id="CHEBI:35235"/>
        <dbReference type="ChEBI" id="CHEBI:43474"/>
        <dbReference type="ChEBI" id="CHEBI:58173"/>
        <dbReference type="ChEBI" id="CHEBI:456216"/>
        <dbReference type="EC" id="6.3.2.2"/>
    </reaction>
</comment>
<comment type="similarity">
    <text evidence="1">Belongs to the glutamate--cysteine ligase type 2 family. YbdK subfamily.</text>
</comment>
<evidence type="ECO:0000255" key="1">
    <source>
        <dbReference type="HAMAP-Rule" id="MF_01609"/>
    </source>
</evidence>
<gene>
    <name type="ordered locus">LHK_00706</name>
</gene>
<keyword id="KW-0067">ATP-binding</keyword>
<keyword id="KW-0436">Ligase</keyword>
<keyword id="KW-0547">Nucleotide-binding</keyword>
<keyword id="KW-1185">Reference proteome</keyword>